<name>B1H1_LOXIN</name>
<proteinExistence type="evidence at protein level"/>
<sequence>MLLPAVISFIVYAVFLQEANGHAAERADSRKPIWDIAHMVNDLGLVDEYLGDGANGLELDVAFTADGTADKMYHGVPCDCFRSCTRTEGFTKYMDYIRQLTTPGNSKFKSQLILLIMDLKLNGIEPNVAYAAGKSVAEKLLSGYWQNGKSGARAYIVLSLETITRPNFISGFRDAIKASGHEELFEKIGWDFSGNEDLGEIRRVYQKYGIEDHIWQGDGITNCLPRGDYRLTEAMKKKNDPNYKYTLKVYTWSIDKESSIRNALRLGVDAVMTNYPARVKSILRESEFSGTHRMATYDDNPWQK</sequence>
<accession>Q2XQ09</accession>
<accession>B2KKW1</accession>
<accession>Q27Q55</accession>
<organism>
    <name type="scientific">Loxosceles intermedia</name>
    <name type="common">Brown spider</name>
    <dbReference type="NCBI Taxonomy" id="58218"/>
    <lineage>
        <taxon>Eukaryota</taxon>
        <taxon>Metazoa</taxon>
        <taxon>Ecdysozoa</taxon>
        <taxon>Arthropoda</taxon>
        <taxon>Chelicerata</taxon>
        <taxon>Arachnida</taxon>
        <taxon>Araneae</taxon>
        <taxon>Araneomorphae</taxon>
        <taxon>Haplogynae</taxon>
        <taxon>Scytodoidea</taxon>
        <taxon>Sicariidae</taxon>
        <taxon>Loxosceles</taxon>
    </lineage>
</organism>
<feature type="signal peptide" evidence="7">
    <location>
        <begin position="1"/>
        <end position="21"/>
    </location>
</feature>
<feature type="propeptide" id="PRO_0000262457" evidence="1">
    <location>
        <begin position="22"/>
        <end position="26"/>
    </location>
</feature>
<feature type="chain" id="PRO_0000262458" description="Dermonecrotic toxin LiSicTox-betaIA1i">
    <location>
        <begin position="27"/>
        <end position="304"/>
    </location>
</feature>
<feature type="active site" evidence="6">
    <location>
        <position position="38"/>
    </location>
</feature>
<feature type="active site" description="Nucleophile" evidence="6">
    <location>
        <position position="74"/>
    </location>
</feature>
<feature type="binding site" evidence="6">
    <location>
        <position position="58"/>
    </location>
    <ligand>
        <name>Mg(2+)</name>
        <dbReference type="ChEBI" id="CHEBI:18420"/>
    </ligand>
</feature>
<feature type="binding site" evidence="6">
    <location>
        <position position="60"/>
    </location>
    <ligand>
        <name>Mg(2+)</name>
        <dbReference type="ChEBI" id="CHEBI:18420"/>
    </ligand>
</feature>
<feature type="binding site" evidence="6">
    <location>
        <position position="118"/>
    </location>
    <ligand>
        <name>Mg(2+)</name>
        <dbReference type="ChEBI" id="CHEBI:18420"/>
    </ligand>
</feature>
<feature type="site" description="May prevent sphingomyelin recognition" evidence="14">
    <location>
        <position position="122"/>
    </location>
</feature>
<feature type="site" description="May prevent sphingomyelin recognition" evidence="14">
    <location>
        <position position="161"/>
    </location>
</feature>
<feature type="disulfide bond" evidence="4">
    <location>
        <begin position="78"/>
        <end position="84"/>
    </location>
</feature>
<feature type="disulfide bond" evidence="4">
    <location>
        <begin position="80"/>
        <end position="223"/>
    </location>
</feature>
<feature type="sequence conflict" description="In Ref. 2; ABD48088/ABU43334." evidence="13" ref="2">
    <original>I</original>
    <variation>T</variation>
    <location>
        <position position="10"/>
    </location>
</feature>
<feature type="sequence conflict" description="In Ref. 2." evidence="13" ref="2">
    <original>SRK</original>
    <variation>KRR</variation>
    <location>
        <begin position="29"/>
        <end position="31"/>
    </location>
</feature>
<feature type="sequence conflict" description="In Ref. 2." evidence="13" ref="2">
    <original>DIA</original>
    <variation>NMG</variation>
    <location>
        <begin position="35"/>
        <end position="37"/>
    </location>
</feature>
<feature type="sequence conflict" description="In Ref. 2." evidence="13" ref="2">
    <original>DLGLVDEYLGD</original>
    <variation>AIEQIDEFVNL</variation>
    <location>
        <begin position="42"/>
        <end position="52"/>
    </location>
</feature>
<feature type="sequence conflict" description="In Ref. 2." evidence="13" ref="2">
    <original>GL</original>
    <variation>NI</variation>
    <location>
        <begin position="56"/>
        <end position="57"/>
    </location>
</feature>
<dbReference type="EC" id="4.6.1.-" evidence="5"/>
<dbReference type="EMBL" id="DQ267927">
    <property type="protein sequence ID" value="ABB71184.1"/>
    <property type="molecule type" value="mRNA"/>
</dbReference>
<dbReference type="EMBL" id="DQ388596">
    <property type="protein sequence ID" value="ABD48088.1"/>
    <property type="molecule type" value="mRNA"/>
</dbReference>
<dbReference type="EMBL" id="EF535255">
    <property type="protein sequence ID" value="ABU43334.1"/>
    <property type="molecule type" value="mRNA"/>
</dbReference>
<dbReference type="SMR" id="Q2XQ09"/>
<dbReference type="ArachnoServer" id="AS000143">
    <property type="toxin name" value="Sphingomyelinase D (LiSicTox-betaIA1i)"/>
</dbReference>
<dbReference type="BRENDA" id="3.1.4.4">
    <property type="organism ID" value="8287"/>
</dbReference>
<dbReference type="GO" id="GO:0005576">
    <property type="term" value="C:extracellular region"/>
    <property type="evidence" value="ECO:0007669"/>
    <property type="project" value="UniProtKB-SubCell"/>
</dbReference>
<dbReference type="GO" id="GO:0016829">
    <property type="term" value="F:lyase activity"/>
    <property type="evidence" value="ECO:0007669"/>
    <property type="project" value="UniProtKB-KW"/>
</dbReference>
<dbReference type="GO" id="GO:0046872">
    <property type="term" value="F:metal ion binding"/>
    <property type="evidence" value="ECO:0007669"/>
    <property type="project" value="UniProtKB-KW"/>
</dbReference>
<dbReference type="GO" id="GO:0008081">
    <property type="term" value="F:phosphoric diester hydrolase activity"/>
    <property type="evidence" value="ECO:0007669"/>
    <property type="project" value="InterPro"/>
</dbReference>
<dbReference type="GO" id="GO:0016042">
    <property type="term" value="P:lipid catabolic process"/>
    <property type="evidence" value="ECO:0007669"/>
    <property type="project" value="UniProtKB-KW"/>
</dbReference>
<dbReference type="CDD" id="cd08576">
    <property type="entry name" value="GDPD_like_SMaseD_PLD"/>
    <property type="match status" value="1"/>
</dbReference>
<dbReference type="Gene3D" id="3.20.20.190">
    <property type="entry name" value="Phosphatidylinositol (PI) phosphodiesterase"/>
    <property type="match status" value="1"/>
</dbReference>
<dbReference type="InterPro" id="IPR017946">
    <property type="entry name" value="PLC-like_Pdiesterase_TIM-brl"/>
</dbReference>
<dbReference type="Pfam" id="PF13653">
    <property type="entry name" value="GDPD_2"/>
    <property type="match status" value="1"/>
</dbReference>
<dbReference type="SUPFAM" id="SSF51695">
    <property type="entry name" value="PLC-like phosphodiesterases"/>
    <property type="match status" value="1"/>
</dbReference>
<protein>
    <recommendedName>
        <fullName>Dermonecrotic toxin LiSicTox-betaIA1i</fullName>
        <ecNumber evidence="5">4.6.1.-</ecNumber>
    </recommendedName>
    <alternativeName>
        <fullName>Dermonecrotic toxin 3</fullName>
        <shortName evidence="12">DT3</shortName>
    </alternativeName>
    <alternativeName>
        <fullName>Dermonecrotic toxin-like I</fullName>
    </alternativeName>
    <alternativeName>
        <fullName evidence="11 12">LiRecDT3</fullName>
    </alternativeName>
    <alternativeName>
        <fullName>Loxtox i6</fullName>
    </alternativeName>
    <alternativeName>
        <fullName>P3</fullName>
    </alternativeName>
    <alternativeName>
        <fullName>Phospholipase D</fullName>
        <shortName>PLD</shortName>
    </alternativeName>
    <alternativeName>
        <fullName>Sphingomyelin phosphodiesterase D 3</fullName>
        <shortName>SMD 3</shortName>
        <shortName>Smase D 3</shortName>
        <shortName>Sphingomyelinase D 3</shortName>
    </alternativeName>
</protein>
<keyword id="KW-1015">Disulfide bond</keyword>
<keyword id="KW-0442">Lipid degradation</keyword>
<keyword id="KW-0443">Lipid metabolism</keyword>
<keyword id="KW-0456">Lyase</keyword>
<keyword id="KW-0460">Magnesium</keyword>
<keyword id="KW-0479">Metal-binding</keyword>
<keyword id="KW-0964">Secreted</keyword>
<keyword id="KW-0732">Signal</keyword>
<keyword id="KW-0865">Zymogen</keyword>
<evidence type="ECO:0000250" key="1"/>
<evidence type="ECO:0000250" key="2">
    <source>
        <dbReference type="UniProtKB" id="A0A0D4WTV1"/>
    </source>
</evidence>
<evidence type="ECO:0000250" key="3">
    <source>
        <dbReference type="UniProtKB" id="A0A0D4WV12"/>
    </source>
</evidence>
<evidence type="ECO:0000250" key="4">
    <source>
        <dbReference type="UniProtKB" id="P0CE80"/>
    </source>
</evidence>
<evidence type="ECO:0000250" key="5">
    <source>
        <dbReference type="UniProtKB" id="Q4ZFU2"/>
    </source>
</evidence>
<evidence type="ECO:0000250" key="6">
    <source>
        <dbReference type="UniProtKB" id="Q8I914"/>
    </source>
</evidence>
<evidence type="ECO:0000255" key="7"/>
<evidence type="ECO:0000269" key="8">
    <source>
    </source>
</evidence>
<evidence type="ECO:0000269" key="9">
    <source>
    </source>
</evidence>
<evidence type="ECO:0000269" key="10">
    <source>
    </source>
</evidence>
<evidence type="ECO:0000303" key="11">
    <source>
    </source>
</evidence>
<evidence type="ECO:0000303" key="12">
    <source>
    </source>
</evidence>
<evidence type="ECO:0000305" key="13"/>
<evidence type="ECO:0000305" key="14">
    <source>
    </source>
</evidence>
<evidence type="ECO:0000305" key="15">
    <source>
    </source>
</evidence>
<comment type="function">
    <text evidence="2 8 9 10">Dermonecrotic toxins cleave the phosphodiester linkage between the phosphate and headgroup of certain phospholipids (sphingolipid and lysolipid substrates), forming an alcohol (often choline) and a cyclic phosphate (By similarity). This toxin acts on sphingomyelin (SM) with low activity (PubMed:16581177). It may also act on ceramide phosphoethanolamine (CPE), lysophosphatidylcholine (LPC) and lysophosphatidylethanolamine (LPE), but not on lysophosphatidylserine (LPS), and lysophosphatidylglycerol (LPG) (By similarity). It acts by transphosphatidylation, releasing exclusively cyclic phosphate products as second products (By similarity). Induces inflammatory response but no or very weak hemolysis, dermonecrosis, vascular permeability, edema, and cytotoxicity against renal epithelial cells (PubMed:16581177, PubMed:17900646, PubMed:21590705). Causes swelling and erythema (PubMed:16581177). In vivo, is not lethal to mice when intraperitoneally injected (PubMed:17900646).</text>
</comment>
<comment type="catalytic activity">
    <reaction evidence="15">
        <text>an N-(acyl)-sphingosylphosphocholine = an N-(acyl)-sphingosyl-1,3-cyclic phosphate + choline</text>
        <dbReference type="Rhea" id="RHEA:60652"/>
        <dbReference type="ChEBI" id="CHEBI:15354"/>
        <dbReference type="ChEBI" id="CHEBI:64583"/>
        <dbReference type="ChEBI" id="CHEBI:143892"/>
    </reaction>
</comment>
<comment type="catalytic activity">
    <reaction evidence="2">
        <text>an N-(acyl)-sphingosylphosphoethanolamine = an N-(acyl)-sphingosyl-1,3-cyclic phosphate + ethanolamine</text>
        <dbReference type="Rhea" id="RHEA:60648"/>
        <dbReference type="ChEBI" id="CHEBI:57603"/>
        <dbReference type="ChEBI" id="CHEBI:143891"/>
        <dbReference type="ChEBI" id="CHEBI:143892"/>
    </reaction>
</comment>
<comment type="catalytic activity">
    <reaction evidence="2">
        <text>a 1-acyl-sn-glycero-3-phosphocholine = a 1-acyl-sn-glycero-2,3-cyclic phosphate + choline</text>
        <dbReference type="Rhea" id="RHEA:60700"/>
        <dbReference type="ChEBI" id="CHEBI:15354"/>
        <dbReference type="ChEBI" id="CHEBI:58168"/>
        <dbReference type="ChEBI" id="CHEBI:143947"/>
    </reaction>
</comment>
<comment type="catalytic activity">
    <reaction evidence="2">
        <text>a 1-acyl-sn-glycero-3-phosphoethanolamine = a 1-acyl-sn-glycero-2,3-cyclic phosphate + ethanolamine</text>
        <dbReference type="Rhea" id="RHEA:60704"/>
        <dbReference type="ChEBI" id="CHEBI:57603"/>
        <dbReference type="ChEBI" id="CHEBI:64381"/>
        <dbReference type="ChEBI" id="CHEBI:143947"/>
    </reaction>
</comment>
<comment type="cofactor">
    <cofactor evidence="6">
        <name>Mg(2+)</name>
        <dbReference type="ChEBI" id="CHEBI:18420"/>
    </cofactor>
    <text evidence="6">Binds 1 Mg(2+) ion per subunit.</text>
</comment>
<comment type="subcellular location">
    <subcellularLocation>
        <location evidence="15">Secreted</location>
    </subcellularLocation>
</comment>
<comment type="tissue specificity">
    <text evidence="15">Expressed by the venom gland.</text>
</comment>
<comment type="similarity">
    <text evidence="13">Belongs to the arthropod phospholipase D family. Class II subfamily. Class IIb sub-subfamily.</text>
</comment>
<comment type="caution">
    <text evidence="2 3 5">The most common activity assay for dermonecrotic toxins detects enzymatic activity by monitoring choline release from substrate. Liberation of choline from sphingomyelin (SM) or lysophosphatidylcholine (LPC) is commonly assumed to result from substrate hydrolysis, giving either ceramide-1-phosphate (C1P) or lysophosphatidic acid (LPA), respectively, as a second product. However, two studies from Lajoie and colleagues (2013 and 2015) report the observation of exclusive formation of cyclic phosphate products as second products, resulting from intramolecular transphosphatidylation. Cyclic phosphates have vastly different biological properties from their monoester counterparts, and they may be relevant to the pathology of brown spider envenomation.</text>
</comment>
<reference key="1">
    <citation type="journal article" date="2006" name="Biochimie">
        <title>Molecular cloning and functional characterization of two isoforms of dermonecrotic toxin from Loxosceles intermedia (Brown spider) venom gland.</title>
        <authorList>
            <person name="da Silveira R.B."/>
            <person name="Pigozzo R.B."/>
            <person name="Chaim O.M."/>
            <person name="Appel M.H."/>
            <person name="Dreyfuss J.L."/>
            <person name="Toma L."/>
            <person name="Mangili O.C."/>
            <person name="Gremski W."/>
            <person name="Dietrich C.P."/>
            <person name="Nader H.B."/>
            <person name="Veiga S.S."/>
        </authorList>
    </citation>
    <scope>NUCLEOTIDE SEQUENCE [MRNA]</scope>
    <scope>FUNCTION</scope>
    <scope>CATALYTIC ACTIVITY</scope>
    <source>
        <tissue>Venom gland</tissue>
    </source>
</reference>
<reference key="2">
    <citation type="journal article" date="2007" name="Toxicon">
        <title>The Loxtox protein family in Loxosceles intermedia (Mello-Leitao) venom.</title>
        <authorList>
            <person name="Kalapothakis E."/>
            <person name="Chatzaki M."/>
            <person name="Goncalves-Dornelas H."/>
            <person name="de Castro C.S."/>
            <person name="Silvestre F.G."/>
            <person name="Laborne F.V."/>
            <person name="de Moura J.F."/>
            <person name="Veiga S.S."/>
            <person name="Chavez-Olortegui C."/>
            <person name="Granier C."/>
            <person name="Barbaro K.C."/>
        </authorList>
    </citation>
    <scope>NUCLEOTIDE SEQUENCE [MRNA]</scope>
    <source>
        <tissue>Venom gland</tissue>
    </source>
</reference>
<reference key="3">
    <citation type="journal article" date="2006" name="Biochem. Biophys. Res. Commun.">
        <title>Structural insights into the catalytic mechanism of sphingomyelinases D and evolutionary relationship to glycerophosphodiester phosphodiesterases.</title>
        <authorList>
            <person name="Murakami M.T."/>
            <person name="Fernandes-Pedrosa M.F."/>
            <person name="de Andrade S.A."/>
            <person name="Gabdoulkhakov A."/>
            <person name="Betzel C."/>
            <person name="Tambourgi D.V."/>
            <person name="Arni R.K."/>
        </authorList>
    </citation>
    <scope>IMPORTANT SITES FOR ACTIVITY ON SPHINGOMYELIN</scope>
</reference>
<reference key="4">
    <citation type="journal article" date="2007" name="Toxicon">
        <title>Biological and structural comparison of recombinant phospholipase D toxins from Loxosceles intermedia (brown spider) venom.</title>
        <authorList>
            <person name="Ribeiro R.O."/>
            <person name="Chaim O.M."/>
            <person name="da Silveira R.B."/>
            <person name="Gremski L.H."/>
            <person name="Sade Y.B."/>
            <person name="Paludo K.S."/>
            <person name="Senff-Ribeiro A."/>
            <person name="de Moura J."/>
            <person name="Chavez-Olortegui C."/>
            <person name="Gremski W."/>
            <person name="Nader H.B."/>
            <person name="Veiga S.S."/>
        </authorList>
    </citation>
    <scope>FUNCTION</scope>
    <scope>BIOASSAY</scope>
</reference>
<reference key="5">
    <citation type="journal article" date="2011" name="J. Cell. Biochem.">
        <title>The relationship between calcium and the metabolism of plasma membrane phospholipids in hemolysis induced by brown spider venom phospholipase-D toxin.</title>
        <authorList>
            <person name="Chaves-Moreira D."/>
            <person name="Souza F.N."/>
            <person name="Fogaca R.T."/>
            <person name="Mangili O.C."/>
            <person name="Gremski W."/>
            <person name="Senff-Ribeiro A."/>
            <person name="Chaim O.M."/>
            <person name="Veiga S.S."/>
        </authorList>
    </citation>
    <scope>FUNCTION</scope>
</reference>